<feature type="chain" id="PRO_0000158053" description="Protein-glutamate methylesterase/protein-glutamine glutaminase 1">
    <location>
        <begin position="1"/>
        <end position="357"/>
    </location>
</feature>
<feature type="domain" description="Response regulatory" evidence="1">
    <location>
        <begin position="10"/>
        <end position="127"/>
    </location>
</feature>
<feature type="domain" description="CheB-type methylesterase" evidence="1">
    <location>
        <begin position="159"/>
        <end position="353"/>
    </location>
</feature>
<feature type="active site" evidence="1">
    <location>
        <position position="171"/>
    </location>
</feature>
<feature type="active site" evidence="1">
    <location>
        <position position="198"/>
    </location>
</feature>
<feature type="active site" evidence="1">
    <location>
        <position position="295"/>
    </location>
</feature>
<feature type="modified residue" description="4-aspartylphosphate" evidence="1">
    <location>
        <position position="61"/>
    </location>
</feature>
<keyword id="KW-0145">Chemotaxis</keyword>
<keyword id="KW-0963">Cytoplasm</keyword>
<keyword id="KW-0378">Hydrolase</keyword>
<keyword id="KW-0597">Phosphoprotein</keyword>
<accession>Q8Q009</accession>
<name>CHEB1_METMA</name>
<protein>
    <recommendedName>
        <fullName evidence="1">Protein-glutamate methylesterase/protein-glutamine glutaminase 1</fullName>
        <ecNumber evidence="1">3.1.1.61</ecNumber>
        <ecNumber evidence="1">3.5.1.44</ecNumber>
    </recommendedName>
</protein>
<dbReference type="EC" id="3.1.1.61" evidence="1"/>
<dbReference type="EC" id="3.5.1.44" evidence="1"/>
<dbReference type="EMBL" id="AE008384">
    <property type="protein sequence ID" value="AAM30025.1"/>
    <property type="molecule type" value="Genomic_DNA"/>
</dbReference>
<dbReference type="SMR" id="Q8Q009"/>
<dbReference type="KEGG" id="mma:MM_0329"/>
<dbReference type="PATRIC" id="fig|192952.21.peg.401"/>
<dbReference type="eggNOG" id="arCOG02382">
    <property type="taxonomic scope" value="Archaea"/>
</dbReference>
<dbReference type="HOGENOM" id="CLU_000445_51_0_2"/>
<dbReference type="Proteomes" id="UP000000595">
    <property type="component" value="Chromosome"/>
</dbReference>
<dbReference type="GO" id="GO:0005737">
    <property type="term" value="C:cytoplasm"/>
    <property type="evidence" value="ECO:0007669"/>
    <property type="project" value="UniProtKB-SubCell"/>
</dbReference>
<dbReference type="GO" id="GO:0000156">
    <property type="term" value="F:phosphorelay response regulator activity"/>
    <property type="evidence" value="ECO:0007669"/>
    <property type="project" value="InterPro"/>
</dbReference>
<dbReference type="GO" id="GO:0008984">
    <property type="term" value="F:protein-glutamate methylesterase activity"/>
    <property type="evidence" value="ECO:0007669"/>
    <property type="project" value="UniProtKB-UniRule"/>
</dbReference>
<dbReference type="GO" id="GO:0050568">
    <property type="term" value="F:protein-glutamine glutaminase activity"/>
    <property type="evidence" value="ECO:0007669"/>
    <property type="project" value="UniProtKB-UniRule"/>
</dbReference>
<dbReference type="GO" id="GO:0006935">
    <property type="term" value="P:chemotaxis"/>
    <property type="evidence" value="ECO:0007669"/>
    <property type="project" value="UniProtKB-UniRule"/>
</dbReference>
<dbReference type="CDD" id="cd16432">
    <property type="entry name" value="CheB_Rec"/>
    <property type="match status" value="1"/>
</dbReference>
<dbReference type="CDD" id="cd17541">
    <property type="entry name" value="REC_CheB-like"/>
    <property type="match status" value="1"/>
</dbReference>
<dbReference type="Gene3D" id="3.40.50.2300">
    <property type="match status" value="1"/>
</dbReference>
<dbReference type="Gene3D" id="3.40.50.180">
    <property type="entry name" value="Methylesterase CheB, C-terminal domain"/>
    <property type="match status" value="1"/>
</dbReference>
<dbReference type="HAMAP" id="MF_00099">
    <property type="entry name" value="CheB_chemtxs"/>
    <property type="match status" value="1"/>
</dbReference>
<dbReference type="InterPro" id="IPR008248">
    <property type="entry name" value="CheB-like"/>
</dbReference>
<dbReference type="InterPro" id="IPR035909">
    <property type="entry name" value="CheB_C"/>
</dbReference>
<dbReference type="InterPro" id="IPR011006">
    <property type="entry name" value="CheY-like_superfamily"/>
</dbReference>
<dbReference type="InterPro" id="IPR000673">
    <property type="entry name" value="Sig_transdc_resp-reg_Me-estase"/>
</dbReference>
<dbReference type="InterPro" id="IPR001789">
    <property type="entry name" value="Sig_transdc_resp-reg_receiver"/>
</dbReference>
<dbReference type="NCBIfam" id="NF001965">
    <property type="entry name" value="PRK00742.1"/>
    <property type="match status" value="1"/>
</dbReference>
<dbReference type="PANTHER" id="PTHR42872">
    <property type="entry name" value="PROTEIN-GLUTAMATE METHYLESTERASE/PROTEIN-GLUTAMINE GLUTAMINASE"/>
    <property type="match status" value="1"/>
</dbReference>
<dbReference type="PANTHER" id="PTHR42872:SF6">
    <property type="entry name" value="PROTEIN-GLUTAMATE METHYLESTERASE_PROTEIN-GLUTAMINE GLUTAMINASE"/>
    <property type="match status" value="1"/>
</dbReference>
<dbReference type="Pfam" id="PF01339">
    <property type="entry name" value="CheB_methylest"/>
    <property type="match status" value="1"/>
</dbReference>
<dbReference type="Pfam" id="PF00072">
    <property type="entry name" value="Response_reg"/>
    <property type="match status" value="1"/>
</dbReference>
<dbReference type="PIRSF" id="PIRSF000876">
    <property type="entry name" value="RR_chemtxs_CheB"/>
    <property type="match status" value="1"/>
</dbReference>
<dbReference type="SMART" id="SM00448">
    <property type="entry name" value="REC"/>
    <property type="match status" value="1"/>
</dbReference>
<dbReference type="SUPFAM" id="SSF52172">
    <property type="entry name" value="CheY-like"/>
    <property type="match status" value="1"/>
</dbReference>
<dbReference type="SUPFAM" id="SSF52738">
    <property type="entry name" value="Methylesterase CheB, C-terminal domain"/>
    <property type="match status" value="1"/>
</dbReference>
<dbReference type="PROSITE" id="PS50122">
    <property type="entry name" value="CHEB"/>
    <property type="match status" value="1"/>
</dbReference>
<dbReference type="PROSITE" id="PS50110">
    <property type="entry name" value="RESPONSE_REGULATORY"/>
    <property type="match status" value="1"/>
</dbReference>
<sequence length="357" mass="38425">MNEFGDSMIRTLIVDDSAFMRMAIRSMLASSPDIKIAGDACNGKEAVDKSKSLHPDIIIMDVNMPVMDGLTAVKTIMSTDPVPIIMFSTLTVEGSKEALEALQLGAIDFVPKSESHHDVNKIEKELVDKIRNIHSSNPSILRLINMRKFKGEVVRGKWSCAGDFAVLIGSSTGGPSSLEQVIPRLPGDLPAPVFVVQHMPEGNFCKQLAERLNFLSELEIKEARNNEKVTAGVVYIAPGGYHMTVKKALGVTRIKLIKSQPVHAVMPAVDVIAESMLDVYGKNIVAAILTGMGFDGAAGFKKIRDAGGSTIACSEDTCVIFGMPKAAIAAGGIDTVKPIFEIPEEIVRMSEVKCNGK</sequence>
<proteinExistence type="inferred from homology"/>
<organism>
    <name type="scientific">Methanosarcina mazei (strain ATCC BAA-159 / DSM 3647 / Goe1 / Go1 / JCM 11833 / OCM 88)</name>
    <name type="common">Methanosarcina frisia</name>
    <dbReference type="NCBI Taxonomy" id="192952"/>
    <lineage>
        <taxon>Archaea</taxon>
        <taxon>Methanobacteriati</taxon>
        <taxon>Methanobacteriota</taxon>
        <taxon>Stenosarchaea group</taxon>
        <taxon>Methanomicrobia</taxon>
        <taxon>Methanosarcinales</taxon>
        <taxon>Methanosarcinaceae</taxon>
        <taxon>Methanosarcina</taxon>
    </lineage>
</organism>
<reference key="1">
    <citation type="journal article" date="2002" name="J. Mol. Microbiol. Biotechnol.">
        <title>The genome of Methanosarcina mazei: evidence for lateral gene transfer between Bacteria and Archaea.</title>
        <authorList>
            <person name="Deppenmeier U."/>
            <person name="Johann A."/>
            <person name="Hartsch T."/>
            <person name="Merkl R."/>
            <person name="Schmitz R.A."/>
            <person name="Martinez-Arias R."/>
            <person name="Henne A."/>
            <person name="Wiezer A."/>
            <person name="Baeumer S."/>
            <person name="Jacobi C."/>
            <person name="Brueggemann H."/>
            <person name="Lienard T."/>
            <person name="Christmann A."/>
            <person name="Boemecke M."/>
            <person name="Steckel S."/>
            <person name="Bhattacharyya A."/>
            <person name="Lykidis A."/>
            <person name="Overbeek R."/>
            <person name="Klenk H.-P."/>
            <person name="Gunsalus R.P."/>
            <person name="Fritz H.-J."/>
            <person name="Gottschalk G."/>
        </authorList>
    </citation>
    <scope>NUCLEOTIDE SEQUENCE [LARGE SCALE GENOMIC DNA]</scope>
    <source>
        <strain>ATCC BAA-159 / DSM 3647 / Goe1 / Go1 / JCM 11833 / OCM 88</strain>
    </source>
</reference>
<evidence type="ECO:0000255" key="1">
    <source>
        <dbReference type="HAMAP-Rule" id="MF_00099"/>
    </source>
</evidence>
<comment type="function">
    <text evidence="1">Involved in chemotaxis. Part of a chemotaxis signal transduction system that modulates chemotaxis in response to various stimuli. Catalyzes the demethylation of specific methylglutamate residues introduced into the chemoreceptors (methyl-accepting chemotaxis proteins or MCP) by CheR. Also mediates the irreversible deamidation of specific glutamine residues to glutamic acid.</text>
</comment>
<comment type="catalytic activity">
    <reaction evidence="1">
        <text>[protein]-L-glutamate 5-O-methyl ester + H2O = L-glutamyl-[protein] + methanol + H(+)</text>
        <dbReference type="Rhea" id="RHEA:23236"/>
        <dbReference type="Rhea" id="RHEA-COMP:10208"/>
        <dbReference type="Rhea" id="RHEA-COMP:10311"/>
        <dbReference type="ChEBI" id="CHEBI:15377"/>
        <dbReference type="ChEBI" id="CHEBI:15378"/>
        <dbReference type="ChEBI" id="CHEBI:17790"/>
        <dbReference type="ChEBI" id="CHEBI:29973"/>
        <dbReference type="ChEBI" id="CHEBI:82795"/>
        <dbReference type="EC" id="3.1.1.61"/>
    </reaction>
</comment>
<comment type="catalytic activity">
    <reaction evidence="1">
        <text>L-glutaminyl-[protein] + H2O = L-glutamyl-[protein] + NH4(+)</text>
        <dbReference type="Rhea" id="RHEA:16441"/>
        <dbReference type="Rhea" id="RHEA-COMP:10207"/>
        <dbReference type="Rhea" id="RHEA-COMP:10208"/>
        <dbReference type="ChEBI" id="CHEBI:15377"/>
        <dbReference type="ChEBI" id="CHEBI:28938"/>
        <dbReference type="ChEBI" id="CHEBI:29973"/>
        <dbReference type="ChEBI" id="CHEBI:30011"/>
        <dbReference type="EC" id="3.5.1.44"/>
    </reaction>
</comment>
<comment type="subcellular location">
    <subcellularLocation>
        <location evidence="1">Cytoplasm</location>
    </subcellularLocation>
</comment>
<comment type="domain">
    <text evidence="1">Contains a C-terminal catalytic domain, and an N-terminal region which modulates catalytic activity.</text>
</comment>
<comment type="PTM">
    <text evidence="1">Phosphorylated by CheA. Phosphorylation of the N-terminal regulatory domain activates the methylesterase activity.</text>
</comment>
<comment type="similarity">
    <text evidence="1">Belongs to the CheB family.</text>
</comment>
<gene>
    <name evidence="1" type="primary">cheB1</name>
    <name type="ordered locus">MM_0329</name>
</gene>